<gene>
    <name evidence="7" type="primary">sorD</name>
    <name type="ORF">Pc21g05110</name>
</gene>
<feature type="signal peptide" evidence="2">
    <location>
        <begin position="1"/>
        <end position="23"/>
    </location>
</feature>
<feature type="chain" id="PRO_5002843712" description="FAD-linked oxidoreductase sorD">
    <location>
        <begin position="24"/>
        <end position="471"/>
    </location>
</feature>
<feature type="domain" description="FAD-binding PCMH-type" evidence="4">
    <location>
        <begin position="41"/>
        <end position="212"/>
    </location>
</feature>
<feature type="glycosylation site" description="N-linked (GlcNAc...) asparagine" evidence="3">
    <location>
        <position position="18"/>
    </location>
</feature>
<feature type="glycosylation site" description="N-linked (GlcNAc...) asparagine" evidence="3">
    <location>
        <position position="29"/>
    </location>
</feature>
<feature type="glycosylation site" description="N-linked (GlcNAc...) asparagine" evidence="3">
    <location>
        <position position="174"/>
    </location>
</feature>
<feature type="glycosylation site" description="N-linked (GlcNAc...) asparagine" evidence="3">
    <location>
        <position position="279"/>
    </location>
</feature>
<feature type="glycosylation site" description="N-linked (GlcNAc...) asparagine" evidence="3">
    <location>
        <position position="351"/>
    </location>
</feature>
<accession>B6HNK6</accession>
<name>SORD_PENRW</name>
<evidence type="ECO:0000250" key="1">
    <source>
        <dbReference type="UniProtKB" id="G0R6T3"/>
    </source>
</evidence>
<evidence type="ECO:0000255" key="2"/>
<evidence type="ECO:0000255" key="3">
    <source>
        <dbReference type="PROSITE-ProRule" id="PRU00498"/>
    </source>
</evidence>
<evidence type="ECO:0000255" key="4">
    <source>
        <dbReference type="PROSITE-ProRule" id="PRU00718"/>
    </source>
</evidence>
<evidence type="ECO:0000269" key="5">
    <source>
    </source>
</evidence>
<evidence type="ECO:0000269" key="6">
    <source>
    </source>
</evidence>
<evidence type="ECO:0000303" key="7">
    <source>
    </source>
</evidence>
<evidence type="ECO:0000305" key="8"/>
<evidence type="ECO:0000305" key="9">
    <source>
    </source>
</evidence>
<proteinExistence type="inferred from homology"/>
<dbReference type="EC" id="1.1.1.-" evidence="9"/>
<dbReference type="EMBL" id="AM920436">
    <property type="protein sequence ID" value="CAP95408.1"/>
    <property type="molecule type" value="Genomic_DNA"/>
</dbReference>
<dbReference type="RefSeq" id="XP_002567557.1">
    <property type="nucleotide sequence ID" value="XM_002567511.1"/>
</dbReference>
<dbReference type="SMR" id="B6HNK6"/>
<dbReference type="STRING" id="500485.B6HNK6"/>
<dbReference type="GlyCosmos" id="B6HNK6">
    <property type="glycosylation" value="5 sites, No reported glycans"/>
</dbReference>
<dbReference type="GeneID" id="8313808"/>
<dbReference type="KEGG" id="pcs:N7525_006992"/>
<dbReference type="VEuPathDB" id="FungiDB:PCH_Pc21g05110"/>
<dbReference type="eggNOG" id="ENOG502QVGN">
    <property type="taxonomic scope" value="Eukaryota"/>
</dbReference>
<dbReference type="HOGENOM" id="CLU_018354_10_1_1"/>
<dbReference type="OMA" id="PRCSYLN"/>
<dbReference type="OrthoDB" id="407275at2759"/>
<dbReference type="BioCyc" id="PCHR:PC21G05110-MONOMER"/>
<dbReference type="Proteomes" id="UP000000724">
    <property type="component" value="Contig Pc00c21"/>
</dbReference>
<dbReference type="GO" id="GO:0071949">
    <property type="term" value="F:FAD binding"/>
    <property type="evidence" value="ECO:0007669"/>
    <property type="project" value="InterPro"/>
</dbReference>
<dbReference type="GO" id="GO:0016491">
    <property type="term" value="F:oxidoreductase activity"/>
    <property type="evidence" value="ECO:0007669"/>
    <property type="project" value="UniProtKB-KW"/>
</dbReference>
<dbReference type="Gene3D" id="3.30.465.10">
    <property type="match status" value="1"/>
</dbReference>
<dbReference type="Gene3D" id="3.40.462.20">
    <property type="match status" value="1"/>
</dbReference>
<dbReference type="InterPro" id="IPR012951">
    <property type="entry name" value="BBE"/>
</dbReference>
<dbReference type="InterPro" id="IPR016166">
    <property type="entry name" value="FAD-bd_PCMH"/>
</dbReference>
<dbReference type="InterPro" id="IPR036318">
    <property type="entry name" value="FAD-bd_PCMH-like_sf"/>
</dbReference>
<dbReference type="InterPro" id="IPR016169">
    <property type="entry name" value="FAD-bd_PCMH_sub2"/>
</dbReference>
<dbReference type="InterPro" id="IPR050416">
    <property type="entry name" value="FAD-linked_Oxidoreductase"/>
</dbReference>
<dbReference type="InterPro" id="IPR006094">
    <property type="entry name" value="Oxid_FAD_bind_N"/>
</dbReference>
<dbReference type="PANTHER" id="PTHR42973">
    <property type="entry name" value="BINDING OXIDOREDUCTASE, PUTATIVE (AFU_ORTHOLOGUE AFUA_1G17690)-RELATED"/>
    <property type="match status" value="1"/>
</dbReference>
<dbReference type="PANTHER" id="PTHR42973:SF17">
    <property type="entry name" value="OXIDASE, PUTATIVE (AFU_ORTHOLOGUE AFUA_6G14340)-RELATED"/>
    <property type="match status" value="1"/>
</dbReference>
<dbReference type="Pfam" id="PF08031">
    <property type="entry name" value="BBE"/>
    <property type="match status" value="1"/>
</dbReference>
<dbReference type="Pfam" id="PF01565">
    <property type="entry name" value="FAD_binding_4"/>
    <property type="match status" value="1"/>
</dbReference>
<dbReference type="SUPFAM" id="SSF56176">
    <property type="entry name" value="FAD-binding/transporter-associated domain-like"/>
    <property type="match status" value="1"/>
</dbReference>
<dbReference type="PROSITE" id="PS51387">
    <property type="entry name" value="FAD_PCMH"/>
    <property type="match status" value="1"/>
</dbReference>
<organism>
    <name type="scientific">Penicillium rubens (strain ATCC 28089 / DSM 1075 / NRRL 1951 / Wisconsin 54-1255)</name>
    <name type="common">Penicillium chrysogenum</name>
    <dbReference type="NCBI Taxonomy" id="500485"/>
    <lineage>
        <taxon>Eukaryota</taxon>
        <taxon>Fungi</taxon>
        <taxon>Dikarya</taxon>
        <taxon>Ascomycota</taxon>
        <taxon>Pezizomycotina</taxon>
        <taxon>Eurotiomycetes</taxon>
        <taxon>Eurotiomycetidae</taxon>
        <taxon>Eurotiales</taxon>
        <taxon>Aspergillaceae</taxon>
        <taxon>Penicillium</taxon>
        <taxon>Penicillium chrysogenum species complex</taxon>
    </lineage>
</organism>
<sequence length="471" mass="50365">MQAASAFATCLLASVGGNSSAVAFPNQANYSTLVAPYNFDLLTTPSAIVWPQDTQQVAAAVKCAVDSDIKVQPKSGGHNYGNYGSTTGELSVNLDNLQHFSMDETSWTARLGPGNRLGRVTELMYNNGGRHVPHGTTFTVGLGGHATVGGAGAASRMHGLLLDYVEEVEVVLANSSIVRASKSHNEDLFFAVRGAASSVGIVTDFSIRTEPVPVSSVTYSYIWEGTDPAARAEVFLTWQSLLAGGSLPQHMAYDLVATANSMILGGAYFGSQEDFEAFNLSSHFKVAPDVAHIKTYTNFFDFSAAASAQTKAAGIASPSHFYAKSLVFNQQTLIPDDAAEEVFKYLATTKNGTDLYAVTFAALGGAVRDVSASETAFYHRDASYFMFSFGRTSGDLTDTTVQFLDGLSEVLTSGQPDAYYGQYVGNVDPRQSTDKALTGYYGKNLHRLQQIKSAVDPNDVFHNQQSIPPLS</sequence>
<comment type="function">
    <text evidence="1 5 6">FAD-linked oxidoreductase; part of the gene cluster that mediates the biosynthesis of sorbicillinoids, a diverse group of yellow secondary metabolites that restrict growth of competing pathogenic fungi but not of bacteria (PubMed:25580210, PubMed:28618182). Sorbicillinoids biosynthesis requires the action of two PKSs (PubMed:25580210). SorA iteratively combines three acetyl units and the growing chain is modified by the ketoacyl reductase subunit, and optional by the enoyl reductase subunit in the second cycle (PubMed:25580210). The polyketide is then handed over to the PKS SorB, which adds three more acetyl units, and two methyl groups (PubMed:25580210). SorB releases an aldehyde, which undergoes spontaneous cyclization resulting in the formation of sorbicillin or 2',3'-dihydrosorbicillin (PubMed:25580210). The monooxygenase sorC oxidizes sorbicillin and 2',3'-dihydrosorbicillin to 2',3'-dihydrosorbicillinol and sorbicillinol, respectively (PubMed:28618182). The oxidoreductase sorD further converts sorbicillinol into oxosorbicillinol (PubMed:28618182). Sorbicillinol is the building block for the other sorbicillinoids such as disorbicillinol, bisvertinolon, and dihydrobisvertinolone (By similarity).</text>
</comment>
<comment type="cofactor">
    <cofactor evidence="8">
        <name>FAD</name>
        <dbReference type="ChEBI" id="CHEBI:57692"/>
    </cofactor>
</comment>
<comment type="pathway">
    <text evidence="6">Secondary metabolite biosynthesis.</text>
</comment>
<comment type="disruption phenotype">
    <text evidence="6">Leads to the accumulation of sorbicillinol and impairs the production of oxosorbicillinol (PubMed:28618182).</text>
</comment>
<comment type="similarity">
    <text evidence="8">Belongs to the oxygen-dependent FAD-linked oxidoreductase family.</text>
</comment>
<protein>
    <recommendedName>
        <fullName evidence="7">FAD-linked oxidoreductase sorD</fullName>
        <ecNumber evidence="9">1.1.1.-</ecNumber>
    </recommendedName>
    <alternativeName>
        <fullName evidence="7">Sorbicillinoid biosynthetic cluster protein D</fullName>
    </alternativeName>
</protein>
<reference key="1">
    <citation type="journal article" date="2008" name="Nat. Biotechnol.">
        <title>Genome sequencing and analysis of the filamentous fungus Penicillium chrysogenum.</title>
        <authorList>
            <person name="van den Berg M.A."/>
            <person name="Albang R."/>
            <person name="Albermann K."/>
            <person name="Badger J.H."/>
            <person name="Daran J.-M."/>
            <person name="Driessen A.J.M."/>
            <person name="Garcia-Estrada C."/>
            <person name="Fedorova N.D."/>
            <person name="Harris D.M."/>
            <person name="Heijne W.H.M."/>
            <person name="Joardar V.S."/>
            <person name="Kiel J.A.K.W."/>
            <person name="Kovalchuk A."/>
            <person name="Martin J.F."/>
            <person name="Nierman W.C."/>
            <person name="Nijland J.G."/>
            <person name="Pronk J.T."/>
            <person name="Roubos J.A."/>
            <person name="van der Klei I.J."/>
            <person name="van Peij N.N.M.E."/>
            <person name="Veenhuis M."/>
            <person name="von Doehren H."/>
            <person name="Wagner C."/>
            <person name="Wortman J.R."/>
            <person name="Bovenberg R.A.L."/>
        </authorList>
    </citation>
    <scope>NUCLEOTIDE SEQUENCE [LARGE SCALE GENOMIC DNA]</scope>
    <source>
        <strain>ATCC 28089 / DSM 1075 / NRRL 1951 / Wisconsin 54-1255</strain>
    </source>
</reference>
<reference key="2">
    <citation type="journal article" date="2014" name="Chem. Sci.">
        <title>Oxidative dearomatisation: the key step of sorbicillinoid biosynthesis.</title>
        <authorList>
            <person name="Fahad A.A."/>
            <person name="Abood A."/>
            <person name="Fisch K.M."/>
            <person name="Osipow A."/>
            <person name="Davison J."/>
            <person name="Avramovic M."/>
            <person name="Butts C.P."/>
            <person name="Piel J."/>
            <person name="Simpson T.J."/>
            <person name="Cox R.J."/>
        </authorList>
    </citation>
    <scope>FUNCTION</scope>
</reference>
<reference key="3">
    <citation type="journal article" date="2017" name="Microb. Biotechnol.">
        <title>Mechanism and regulation of sorbicillin biosynthesis by Penicillium chrysogenum.</title>
        <authorList>
            <person name="Guzman-Chavez F."/>
            <person name="Salo O."/>
            <person name="Nygaard Y."/>
            <person name="Lankhorst P.P."/>
            <person name="Bovenberg R.A.L."/>
            <person name="Driessen A.J.M."/>
        </authorList>
    </citation>
    <scope>FUNCTION</scope>
    <scope>DISRUPTION PHENOTYPE</scope>
</reference>
<keyword id="KW-0274">FAD</keyword>
<keyword id="KW-0285">Flavoprotein</keyword>
<keyword id="KW-0325">Glycoprotein</keyword>
<keyword id="KW-0560">Oxidoreductase</keyword>
<keyword id="KW-1185">Reference proteome</keyword>
<keyword id="KW-0732">Signal</keyword>